<sequence length="140" mass="14473">MDVFMKGLSKAKEGVVAAAEKTKQGVAEAAGKTKEGVLYVGSKTKEGVVHGVATVAEKTKEQVTNVGGAVVTGVTAVAQKTVEGAGSIAAATGFIKKDQLGKNEEGAPQEGILQDMPVDPDNEAYEMPSEEGYQDYEPEA</sequence>
<evidence type="ECO:0000250" key="1"/>
<evidence type="ECO:0000250" key="2">
    <source>
        <dbReference type="UniProtKB" id="O55042"/>
    </source>
</evidence>
<evidence type="ECO:0000250" key="3">
    <source>
        <dbReference type="UniProtKB" id="P37377"/>
    </source>
</evidence>
<evidence type="ECO:0000250" key="4">
    <source>
        <dbReference type="UniProtKB" id="P37840"/>
    </source>
</evidence>
<evidence type="ECO:0000256" key="5">
    <source>
        <dbReference type="SAM" id="MobiDB-lite"/>
    </source>
</evidence>
<evidence type="ECO:0000305" key="6"/>
<dbReference type="EMBL" id="AY362319">
    <property type="protein sequence ID" value="AAQ85071.1"/>
    <property type="molecule type" value="Genomic_DNA"/>
</dbReference>
<dbReference type="EMBL" id="AY362315">
    <property type="protein sequence ID" value="AAQ85071.1"/>
    <property type="status" value="JOINED"/>
    <property type="molecule type" value="Genomic_DNA"/>
</dbReference>
<dbReference type="EMBL" id="AY362316">
    <property type="protein sequence ID" value="AAQ85071.1"/>
    <property type="status" value="JOINED"/>
    <property type="molecule type" value="Genomic_DNA"/>
</dbReference>
<dbReference type="EMBL" id="AY362317">
    <property type="protein sequence ID" value="AAQ85071.1"/>
    <property type="status" value="JOINED"/>
    <property type="molecule type" value="Genomic_DNA"/>
</dbReference>
<dbReference type="EMBL" id="AY362318">
    <property type="protein sequence ID" value="AAQ85071.1"/>
    <property type="status" value="JOINED"/>
    <property type="molecule type" value="Genomic_DNA"/>
</dbReference>
<dbReference type="RefSeq" id="XP_005555475.1">
    <property type="nucleotide sequence ID" value="XM_005555418.2"/>
</dbReference>
<dbReference type="RefSeq" id="XP_005555476.1">
    <property type="nucleotide sequence ID" value="XM_005555419.2"/>
</dbReference>
<dbReference type="RefSeq" id="XP_005555477.1">
    <property type="nucleotide sequence ID" value="XM_005555420.2"/>
</dbReference>
<dbReference type="RefSeq" id="XP_005555478.1">
    <property type="nucleotide sequence ID" value="XM_005555421.2"/>
</dbReference>
<dbReference type="RefSeq" id="XP_005555479.1">
    <property type="nucleotide sequence ID" value="XM_005555422.2"/>
</dbReference>
<dbReference type="RefSeq" id="XP_015306135.1">
    <property type="nucleotide sequence ID" value="XM_015450649.1"/>
</dbReference>
<dbReference type="RefSeq" id="XP_015306136.1">
    <property type="nucleotide sequence ID" value="XM_015450650.1"/>
</dbReference>
<dbReference type="RefSeq" id="XP_015306137.1">
    <property type="nucleotide sequence ID" value="XM_015450651.1"/>
</dbReference>
<dbReference type="RefSeq" id="XP_015306138.1">
    <property type="nucleotide sequence ID" value="XM_015450652.1"/>
</dbReference>
<dbReference type="BMRB" id="P61142"/>
<dbReference type="STRING" id="9541.ENSMFAP00000041319"/>
<dbReference type="iPTMnet" id="P61142"/>
<dbReference type="ABCD" id="P61142">
    <property type="antibodies" value="1 sequenced antibody"/>
</dbReference>
<dbReference type="Ensembl" id="ENSMFAT00000015593.2">
    <property type="protein sequence ID" value="ENSMFAP00000041317.1"/>
    <property type="gene ID" value="ENSMFAG00000041402.2"/>
</dbReference>
<dbReference type="GeneID" id="102119369"/>
<dbReference type="CTD" id="6622"/>
<dbReference type="VEuPathDB" id="HostDB:ENSMFAG00000041402"/>
<dbReference type="eggNOG" id="ENOG502S0Q7">
    <property type="taxonomic scope" value="Eukaryota"/>
</dbReference>
<dbReference type="GeneTree" id="ENSGT00950000183175"/>
<dbReference type="OMA" id="LPQEGMM"/>
<dbReference type="Proteomes" id="UP000233100">
    <property type="component" value="Chromosome 5"/>
</dbReference>
<dbReference type="Bgee" id="ENSMFAG00000041402">
    <property type="expression patterns" value="Expressed in temporal lobe and 9 other cell types or tissues"/>
</dbReference>
<dbReference type="GO" id="GO:0043679">
    <property type="term" value="C:axon terminus"/>
    <property type="evidence" value="ECO:0007669"/>
    <property type="project" value="TreeGrafter"/>
</dbReference>
<dbReference type="GO" id="GO:0005829">
    <property type="term" value="C:cytosol"/>
    <property type="evidence" value="ECO:0000250"/>
    <property type="project" value="UniProtKB"/>
</dbReference>
<dbReference type="GO" id="GO:0005615">
    <property type="term" value="C:extracellular space"/>
    <property type="evidence" value="ECO:0000250"/>
    <property type="project" value="UniProtKB"/>
</dbReference>
<dbReference type="GO" id="GO:0016020">
    <property type="term" value="C:membrane"/>
    <property type="evidence" value="ECO:0000250"/>
    <property type="project" value="UniProtKB"/>
</dbReference>
<dbReference type="GO" id="GO:0043025">
    <property type="term" value="C:neuronal cell body"/>
    <property type="evidence" value="ECO:0007669"/>
    <property type="project" value="TreeGrafter"/>
</dbReference>
<dbReference type="GO" id="GO:0005634">
    <property type="term" value="C:nucleus"/>
    <property type="evidence" value="ECO:0000250"/>
    <property type="project" value="UniProtKB"/>
</dbReference>
<dbReference type="GO" id="GO:0005507">
    <property type="term" value="F:copper ion binding"/>
    <property type="evidence" value="ECO:0000250"/>
    <property type="project" value="UniProtKB"/>
</dbReference>
<dbReference type="GO" id="GO:1903136">
    <property type="term" value="F:cuprous ion binding"/>
    <property type="evidence" value="ECO:0007669"/>
    <property type="project" value="TreeGrafter"/>
</dbReference>
<dbReference type="GO" id="GO:0042802">
    <property type="term" value="F:identical protein binding"/>
    <property type="evidence" value="ECO:0000250"/>
    <property type="project" value="UniProtKB"/>
</dbReference>
<dbReference type="GO" id="GO:0007268">
    <property type="term" value="P:chemical synaptic transmission"/>
    <property type="evidence" value="ECO:0007669"/>
    <property type="project" value="TreeGrafter"/>
</dbReference>
<dbReference type="GO" id="GO:0014059">
    <property type="term" value="P:regulation of dopamine secretion"/>
    <property type="evidence" value="ECO:0007669"/>
    <property type="project" value="InterPro"/>
</dbReference>
<dbReference type="GO" id="GO:0050808">
    <property type="term" value="P:synapse organization"/>
    <property type="evidence" value="ECO:0007669"/>
    <property type="project" value="TreeGrafter"/>
</dbReference>
<dbReference type="GO" id="GO:0048488">
    <property type="term" value="P:synaptic vesicle endocytosis"/>
    <property type="evidence" value="ECO:0007669"/>
    <property type="project" value="TreeGrafter"/>
</dbReference>
<dbReference type="FunFam" id="1.10.287.700:FF:000001">
    <property type="entry name" value="Alpha-synuclein"/>
    <property type="match status" value="1"/>
</dbReference>
<dbReference type="Gene3D" id="1.10.287.700">
    <property type="entry name" value="Helix hairpin bin"/>
    <property type="match status" value="1"/>
</dbReference>
<dbReference type="InterPro" id="IPR001058">
    <property type="entry name" value="Synuclein"/>
</dbReference>
<dbReference type="InterPro" id="IPR002460">
    <property type="entry name" value="Synuclein_alpha"/>
</dbReference>
<dbReference type="PANTHER" id="PTHR13820:SF5">
    <property type="entry name" value="ALPHA-SYNUCLEIN"/>
    <property type="match status" value="1"/>
</dbReference>
<dbReference type="PANTHER" id="PTHR13820">
    <property type="entry name" value="SYNUCLEIN"/>
    <property type="match status" value="1"/>
</dbReference>
<dbReference type="Pfam" id="PF01387">
    <property type="entry name" value="Synuclein"/>
    <property type="match status" value="1"/>
</dbReference>
<dbReference type="PRINTS" id="PR01212">
    <property type="entry name" value="ASYNUCLEIN"/>
</dbReference>
<dbReference type="PRINTS" id="PR01211">
    <property type="entry name" value="SYNUCLEIN"/>
</dbReference>
<dbReference type="SUPFAM" id="SSF118375">
    <property type="entry name" value="Synuclein"/>
    <property type="match status" value="1"/>
</dbReference>
<accession>P61142</accession>
<organism>
    <name type="scientific">Macaca fascicularis</name>
    <name type="common">Crab-eating macaque</name>
    <name type="synonym">Cynomolgus monkey</name>
    <dbReference type="NCBI Taxonomy" id="9541"/>
    <lineage>
        <taxon>Eukaryota</taxon>
        <taxon>Metazoa</taxon>
        <taxon>Chordata</taxon>
        <taxon>Craniata</taxon>
        <taxon>Vertebrata</taxon>
        <taxon>Euteleostomi</taxon>
        <taxon>Mammalia</taxon>
        <taxon>Eutheria</taxon>
        <taxon>Euarchontoglires</taxon>
        <taxon>Primates</taxon>
        <taxon>Haplorrhini</taxon>
        <taxon>Catarrhini</taxon>
        <taxon>Cercopithecidae</taxon>
        <taxon>Cercopithecinae</taxon>
        <taxon>Macaca</taxon>
    </lineage>
</organism>
<gene>
    <name type="primary">SNCA</name>
</gene>
<keyword id="KW-0007">Acetylation</keyword>
<keyword id="KW-0966">Cell projection</keyword>
<keyword id="KW-0186">Copper</keyword>
<keyword id="KW-0963">Cytoplasm</keyword>
<keyword id="KW-0472">Membrane</keyword>
<keyword id="KW-0479">Metal-binding</keyword>
<keyword id="KW-0539">Nucleus</keyword>
<keyword id="KW-0597">Phosphoprotein</keyword>
<keyword id="KW-1185">Reference proteome</keyword>
<keyword id="KW-0677">Repeat</keyword>
<keyword id="KW-0964">Secreted</keyword>
<keyword id="KW-0770">Synapse</keyword>
<keyword id="KW-0832">Ubl conjugation</keyword>
<feature type="chain" id="PRO_0000184024" description="Alpha-synuclein">
    <location>
        <begin position="1"/>
        <end position="140"/>
    </location>
</feature>
<feature type="region of interest" description="Disordered" evidence="5">
    <location>
        <begin position="100"/>
        <end position="140"/>
    </location>
</feature>
<feature type="region of interest" description="Interaction with SERF1A" evidence="4">
    <location>
        <begin position="111"/>
        <end position="140"/>
    </location>
</feature>
<feature type="compositionally biased region" description="Acidic residues" evidence="5">
    <location>
        <begin position="118"/>
        <end position="140"/>
    </location>
</feature>
<feature type="binding site" evidence="1">
    <location>
        <position position="2"/>
    </location>
    <ligand>
        <name>Cu cation</name>
        <dbReference type="ChEBI" id="CHEBI:23378"/>
    </ligand>
</feature>
<feature type="binding site" evidence="1">
    <location>
        <position position="50"/>
    </location>
    <ligand>
        <name>Cu cation</name>
        <dbReference type="ChEBI" id="CHEBI:23378"/>
    </ligand>
</feature>
<feature type="modified residue" description="N-acetylmethionine" evidence="4">
    <location>
        <position position="1"/>
    </location>
</feature>
<feature type="modified residue" description="Phosphoserine" evidence="4">
    <location>
        <position position="87"/>
    </location>
</feature>
<feature type="modified residue" description="Phosphotyrosine; by FYN" evidence="4">
    <location>
        <position position="125"/>
    </location>
</feature>
<feature type="modified residue" description="Phosphoserine; by PLK2" evidence="4">
    <location>
        <position position="129"/>
    </location>
</feature>
<name>SYUA_MACFA</name>
<protein>
    <recommendedName>
        <fullName>Alpha-synuclein</fullName>
    </recommendedName>
</protein>
<proteinExistence type="inferred from homology"/>
<reference key="1">
    <citation type="journal article" date="2004" name="Genomics">
        <title>Alpha-synuclein A53T substitution associated with Parkinson disease also marks the divergence of Old World and New World primates.</title>
        <authorList>
            <person name="Hamilton B.A."/>
        </authorList>
    </citation>
    <scope>NUCLEOTIDE SEQUENCE [GENOMIC DNA]</scope>
</reference>
<comment type="function">
    <text evidence="4">Neuronal protein that plays several roles in synaptic activity such as regulation of synaptic vesicle trafficking and subsequent neurotransmitter release (By similarity). Participates as a monomer in synaptic vesicle exocytosis by enhancing vesicle priming, fusion and dilation of exocytotic fusion pores (By similarity). Mechanistically, acts by increasing local Ca(2+) release from microdomains which is essential for the enhancement of ATP-induced exocytosis (By similarity). Also acts as a molecular chaperone in its multimeric membrane-bound state, assisting in the folding of synaptic fusion components called SNAREs (Soluble NSF Attachment Protein REceptors) at presynaptic plasma membrane in conjunction with cysteine string protein-alpha/DNAJC5 (By similarity). This chaperone activity is important to sustain normal SNARE-complex assembly during aging (By similarity). Also plays a role in the regulation of the dopamine neurotransmission by associating with the dopamine transporter (DAT1) and thereby modulating its activity (By similarity).</text>
</comment>
<comment type="subunit">
    <text evidence="2 3 4">Soluble monomer. Homotetramer. A dynamic intracellular population of tetramers and monomers coexists normally and the tetramer plays an essential role in maintaining homeostasis (By similarity). Interacts with UCHL1 (By similarity). Interacts with phospholipase D and histones. Interacts (via N-terminus) with synphilin-1/SNCAIP; this interaction promotes formation of SNCA inclusions in the cytoplasm. Interacts with CALM1. Interacts with STXBP1; this interaction controls SNCA self-replicating aggregation. Interacts with SNARE components VAMP2 and SNAP25; these interactions allows SNARE complex assembly and integrity (By similarity). Interacts with RPH3A and RAB3A (By similarity). Interacts with SERF1A; this interaction promotes the aggregation of SNCA (By similarity). Interacts with SEPTIN4 (By similarity). Interacts with DDX10; this interaction causes DDX10 mislocalization to the nucleoplasm and cytoplasmic inclusions (By similarity).</text>
</comment>
<comment type="subcellular location">
    <subcellularLocation>
        <location evidence="4">Cytoplasm</location>
    </subcellularLocation>
    <subcellularLocation>
        <location evidence="4">Membrane</location>
    </subcellularLocation>
    <subcellularLocation>
        <location evidence="4">Nucleus</location>
    </subcellularLocation>
    <subcellularLocation>
        <location evidence="4">Synapse</location>
    </subcellularLocation>
    <subcellularLocation>
        <location evidence="4">Secreted</location>
    </subcellularLocation>
    <subcellularLocation>
        <location evidence="2">Cell projection</location>
        <location evidence="2">Axon</location>
    </subcellularLocation>
    <text evidence="2 4">Membrane-bound in dopaminergic neurons (By similarity). Expressed and colocalized with SEPTIN4 in dopaminergic axon terminals, especially at the varicosities (By similarity).</text>
</comment>
<comment type="PTM">
    <text evidence="4">Phosphorylated, predominantly on serine residues. Phosphorylated on Tyr-125 upon osmotic stress.</text>
</comment>
<comment type="PTM">
    <text evidence="3">Ubiquitinated. The predominant conjugate is the diubiquitinated form.</text>
</comment>
<comment type="PTM">
    <text evidence="4">Acetylation at Met-1 seems to be important for proper folding and native oligomeric structure.</text>
</comment>
<comment type="similarity">
    <text evidence="6">Belongs to the synuclein family.</text>
</comment>